<proteinExistence type="inferred from homology"/>
<protein>
    <recommendedName>
        <fullName evidence="1">Elongation factor Ts</fullName>
        <shortName evidence="1">EF-Ts</shortName>
    </recommendedName>
</protein>
<dbReference type="EMBL" id="AP009324">
    <property type="protein sequence ID" value="BAF78130.1"/>
    <property type="molecule type" value="Genomic_DNA"/>
</dbReference>
<dbReference type="RefSeq" id="WP_000201392.1">
    <property type="nucleotide sequence ID" value="NC_009782.1"/>
</dbReference>
<dbReference type="SMR" id="A7X1N5"/>
<dbReference type="KEGG" id="saw:SAHV_1247"/>
<dbReference type="HOGENOM" id="CLU_047155_0_2_9"/>
<dbReference type="GO" id="GO:0005737">
    <property type="term" value="C:cytoplasm"/>
    <property type="evidence" value="ECO:0007669"/>
    <property type="project" value="UniProtKB-SubCell"/>
</dbReference>
<dbReference type="GO" id="GO:0003746">
    <property type="term" value="F:translation elongation factor activity"/>
    <property type="evidence" value="ECO:0007669"/>
    <property type="project" value="UniProtKB-UniRule"/>
</dbReference>
<dbReference type="CDD" id="cd14275">
    <property type="entry name" value="UBA_EF-Ts"/>
    <property type="match status" value="1"/>
</dbReference>
<dbReference type="FunFam" id="1.10.286.20:FF:000003">
    <property type="entry name" value="Elongation factor Ts"/>
    <property type="match status" value="1"/>
</dbReference>
<dbReference type="FunFam" id="1.10.8.10:FF:000001">
    <property type="entry name" value="Elongation factor Ts"/>
    <property type="match status" value="1"/>
</dbReference>
<dbReference type="FunFam" id="3.30.479.20:FF:000005">
    <property type="entry name" value="Elongation factor Ts"/>
    <property type="match status" value="1"/>
</dbReference>
<dbReference type="Gene3D" id="1.10.286.20">
    <property type="match status" value="1"/>
</dbReference>
<dbReference type="Gene3D" id="1.10.8.10">
    <property type="entry name" value="DNA helicase RuvA subunit, C-terminal domain"/>
    <property type="match status" value="1"/>
</dbReference>
<dbReference type="Gene3D" id="3.30.479.20">
    <property type="entry name" value="Elongation factor Ts, dimerisation domain"/>
    <property type="match status" value="2"/>
</dbReference>
<dbReference type="HAMAP" id="MF_00050">
    <property type="entry name" value="EF_Ts"/>
    <property type="match status" value="1"/>
</dbReference>
<dbReference type="InterPro" id="IPR036402">
    <property type="entry name" value="EF-Ts_dimer_sf"/>
</dbReference>
<dbReference type="InterPro" id="IPR001816">
    <property type="entry name" value="Transl_elong_EFTs/EF1B"/>
</dbReference>
<dbReference type="InterPro" id="IPR014039">
    <property type="entry name" value="Transl_elong_EFTs/EF1B_dimer"/>
</dbReference>
<dbReference type="InterPro" id="IPR018101">
    <property type="entry name" value="Transl_elong_Ts_CS"/>
</dbReference>
<dbReference type="InterPro" id="IPR009060">
    <property type="entry name" value="UBA-like_sf"/>
</dbReference>
<dbReference type="NCBIfam" id="TIGR00116">
    <property type="entry name" value="tsf"/>
    <property type="match status" value="1"/>
</dbReference>
<dbReference type="PANTHER" id="PTHR11741">
    <property type="entry name" value="ELONGATION FACTOR TS"/>
    <property type="match status" value="1"/>
</dbReference>
<dbReference type="PANTHER" id="PTHR11741:SF0">
    <property type="entry name" value="ELONGATION FACTOR TS, MITOCHONDRIAL"/>
    <property type="match status" value="1"/>
</dbReference>
<dbReference type="Pfam" id="PF00889">
    <property type="entry name" value="EF_TS"/>
    <property type="match status" value="1"/>
</dbReference>
<dbReference type="SUPFAM" id="SSF54713">
    <property type="entry name" value="Elongation factor Ts (EF-Ts), dimerisation domain"/>
    <property type="match status" value="2"/>
</dbReference>
<dbReference type="SUPFAM" id="SSF46934">
    <property type="entry name" value="UBA-like"/>
    <property type="match status" value="1"/>
</dbReference>
<dbReference type="PROSITE" id="PS01126">
    <property type="entry name" value="EF_TS_1"/>
    <property type="match status" value="1"/>
</dbReference>
<dbReference type="PROSITE" id="PS01127">
    <property type="entry name" value="EF_TS_2"/>
    <property type="match status" value="1"/>
</dbReference>
<evidence type="ECO:0000255" key="1">
    <source>
        <dbReference type="HAMAP-Rule" id="MF_00050"/>
    </source>
</evidence>
<accession>A7X1N5</accession>
<organism>
    <name type="scientific">Staphylococcus aureus (strain Mu3 / ATCC 700698)</name>
    <dbReference type="NCBI Taxonomy" id="418127"/>
    <lineage>
        <taxon>Bacteria</taxon>
        <taxon>Bacillati</taxon>
        <taxon>Bacillota</taxon>
        <taxon>Bacilli</taxon>
        <taxon>Bacillales</taxon>
        <taxon>Staphylococcaceae</taxon>
        <taxon>Staphylococcus</taxon>
    </lineage>
</organism>
<name>EFTS_STAA1</name>
<gene>
    <name evidence="1" type="primary">tsf</name>
    <name type="ordered locus">SAHV_1247</name>
</gene>
<feature type="chain" id="PRO_1000006188" description="Elongation factor Ts">
    <location>
        <begin position="1"/>
        <end position="293"/>
    </location>
</feature>
<feature type="region of interest" description="Involved in Mg(2+) ion dislocation from EF-Tu" evidence="1">
    <location>
        <begin position="80"/>
        <end position="83"/>
    </location>
</feature>
<keyword id="KW-0963">Cytoplasm</keyword>
<keyword id="KW-0251">Elongation factor</keyword>
<keyword id="KW-0648">Protein biosynthesis</keyword>
<comment type="function">
    <text evidence="1">Associates with the EF-Tu.GDP complex and induces the exchange of GDP to GTP. It remains bound to the aminoacyl-tRNA.EF-Tu.GTP complex up to the GTP hydrolysis stage on the ribosome.</text>
</comment>
<comment type="subcellular location">
    <subcellularLocation>
        <location evidence="1">Cytoplasm</location>
    </subcellularLocation>
</comment>
<comment type="similarity">
    <text evidence="1">Belongs to the EF-Ts family.</text>
</comment>
<reference key="1">
    <citation type="journal article" date="2008" name="Antimicrob. Agents Chemother.">
        <title>Mutated response regulator graR is responsible for phenotypic conversion of Staphylococcus aureus from heterogeneous vancomycin-intermediate resistance to vancomycin-intermediate resistance.</title>
        <authorList>
            <person name="Neoh H.-M."/>
            <person name="Cui L."/>
            <person name="Yuzawa H."/>
            <person name="Takeuchi F."/>
            <person name="Matsuo M."/>
            <person name="Hiramatsu K."/>
        </authorList>
    </citation>
    <scope>NUCLEOTIDE SEQUENCE [LARGE SCALE GENOMIC DNA]</scope>
    <source>
        <strain>Mu3 / ATCC 700698</strain>
    </source>
</reference>
<sequence length="293" mass="32493">MATISAKLVKELRKKTGAGMMDCKKALTETDGDIDKAIDYLREKGIAKAAKKADRIAAEGLVHVETKGNDAVIVEINSETDFVARNEGFQELVKEIANQVLDTKAETVEALMETTLPNGKSVDERIKEAISTIGEKLSVRRFAIRTKTDNDAFGAYLHMGGRIGVLTVVEGSTDEEAARDVAMHIAAINPKYVSSEQVSEEEINHEREVLKQQALNEGKPENIVEKMVEGRLRKYLQEICAVDQDFVKNPDVTVEAFLKTKGGKLVDFVRYEVGEGMEKREENFADEVKGQMK</sequence>